<feature type="chain" id="PRO_1000213529" description="UPF0284 protein M1627_0030">
    <location>
        <begin position="1"/>
        <end position="347"/>
    </location>
</feature>
<accession>C3MZX4</accession>
<gene>
    <name type="ordered locus">M1627_0030</name>
</gene>
<evidence type="ECO:0000255" key="1">
    <source>
        <dbReference type="HAMAP-Rule" id="MF_01086"/>
    </source>
</evidence>
<proteinExistence type="inferred from homology"/>
<name>Y030_SACI3</name>
<sequence>MIKEYYGAETFILNKDFAYILVIGTTDVSLIPGLTIAGATPELTHFTPAADAEYVLLGKCKSINTIPVSPTGIPTPALLTRASLSFINPLKIVVNAGSRIVPKIPYIDLQGEPGKDIRKQALSMEKVNNIIENSIKLGEELSNEYELIMIGESIPAGTTTAMATLLALGYDAMDKVSSASPDNPKELKRKVVEEALRNLPTDPLQRLAKVSDPVLLGVAGTSLGFKGKILLAGGTQMTAAAAIINEFDKNKLKDITIGTTKWIVEDKFADMLSLAKQVGVKVLASMLDLSISAYEGIRAYEKGYVKEGVGAGGSAIMALVKGVSNNTLVRKIDELYGELVGSSNLHI</sequence>
<organism>
    <name type="scientific">Saccharolobus islandicus (strain M.16.27)</name>
    <name type="common">Sulfolobus islandicus</name>
    <dbReference type="NCBI Taxonomy" id="427318"/>
    <lineage>
        <taxon>Archaea</taxon>
        <taxon>Thermoproteota</taxon>
        <taxon>Thermoprotei</taxon>
        <taxon>Sulfolobales</taxon>
        <taxon>Sulfolobaceae</taxon>
        <taxon>Saccharolobus</taxon>
    </lineage>
</organism>
<reference key="1">
    <citation type="journal article" date="2009" name="Proc. Natl. Acad. Sci. U.S.A.">
        <title>Biogeography of the Sulfolobus islandicus pan-genome.</title>
        <authorList>
            <person name="Reno M.L."/>
            <person name="Held N.L."/>
            <person name="Fields C.J."/>
            <person name="Burke P.V."/>
            <person name="Whitaker R.J."/>
        </authorList>
    </citation>
    <scope>NUCLEOTIDE SEQUENCE [LARGE SCALE GENOMIC DNA]</scope>
    <source>
        <strain>M.16.27</strain>
    </source>
</reference>
<dbReference type="EMBL" id="CP001401">
    <property type="protein sequence ID" value="ACP54059.1"/>
    <property type="molecule type" value="Genomic_DNA"/>
</dbReference>
<dbReference type="SMR" id="C3MZX4"/>
<dbReference type="KEGG" id="sim:M1627_0030"/>
<dbReference type="HOGENOM" id="CLU_053134_0_0_2"/>
<dbReference type="Proteomes" id="UP000002307">
    <property type="component" value="Chromosome"/>
</dbReference>
<dbReference type="GO" id="GO:0008939">
    <property type="term" value="F:nicotinate-nucleotide-dimethylbenzimidazole phosphoribosyltransferase activity"/>
    <property type="evidence" value="ECO:0007669"/>
    <property type="project" value="InterPro"/>
</dbReference>
<dbReference type="CDD" id="cd02439">
    <property type="entry name" value="DMB-PRT_CobT"/>
    <property type="match status" value="1"/>
</dbReference>
<dbReference type="Gene3D" id="3.40.50.10210">
    <property type="match status" value="1"/>
</dbReference>
<dbReference type="HAMAP" id="MF_01086">
    <property type="entry name" value="UPF0284"/>
    <property type="match status" value="1"/>
</dbReference>
<dbReference type="InterPro" id="IPR003200">
    <property type="entry name" value="Nict_dMeBzImd_PRibTrfase"/>
</dbReference>
<dbReference type="InterPro" id="IPR002805">
    <property type="entry name" value="Nict_dMeBzImd_PRibTrfase_arc"/>
</dbReference>
<dbReference type="InterPro" id="IPR036087">
    <property type="entry name" value="Nict_dMeBzImd_PRibTrfase_sf"/>
</dbReference>
<dbReference type="NCBIfam" id="TIGR00303">
    <property type="entry name" value="nicotinate mononucleotide-dependent phosphoribosyltransferase CobT"/>
    <property type="match status" value="1"/>
</dbReference>
<dbReference type="NCBIfam" id="NF003368">
    <property type="entry name" value="PRK04447.1-1"/>
    <property type="match status" value="1"/>
</dbReference>
<dbReference type="NCBIfam" id="NF003370">
    <property type="entry name" value="PRK04447.1-3"/>
    <property type="match status" value="1"/>
</dbReference>
<dbReference type="NCBIfam" id="NF003372">
    <property type="entry name" value="PRK04447.1-5"/>
    <property type="match status" value="1"/>
</dbReference>
<dbReference type="PANTHER" id="PTHR38811">
    <property type="match status" value="1"/>
</dbReference>
<dbReference type="PANTHER" id="PTHR38811:SF1">
    <property type="entry name" value="UPF0284 PROTEIN SLL1500"/>
    <property type="match status" value="1"/>
</dbReference>
<dbReference type="Pfam" id="PF02277">
    <property type="entry name" value="DBI_PRT"/>
    <property type="match status" value="1"/>
</dbReference>
<dbReference type="SUPFAM" id="SSF52733">
    <property type="entry name" value="Nicotinate mononucleotide:5,6-dimethylbenzimidazole phosphoribosyltransferase (CobT)"/>
    <property type="match status" value="1"/>
</dbReference>
<protein>
    <recommendedName>
        <fullName evidence="1">UPF0284 protein M1627_0030</fullName>
    </recommendedName>
</protein>
<comment type="similarity">
    <text evidence="1">Belongs to the UPF0284 family.</text>
</comment>